<evidence type="ECO:0000250" key="1">
    <source>
        <dbReference type="UniProtKB" id="P14678"/>
    </source>
</evidence>
<evidence type="ECO:0000250" key="2">
    <source>
        <dbReference type="UniProtKB" id="P63163"/>
    </source>
</evidence>
<evidence type="ECO:0000255" key="3">
    <source>
        <dbReference type="PROSITE-ProRule" id="PRU01346"/>
    </source>
</evidence>
<evidence type="ECO:0000256" key="4">
    <source>
        <dbReference type="SAM" id="MobiDB-lite"/>
    </source>
</evidence>
<evidence type="ECO:0000269" key="5">
    <source>
    </source>
</evidence>
<evidence type="ECO:0000269" key="6">
    <source>
    </source>
</evidence>
<evidence type="ECO:0000303" key="7">
    <source>
    </source>
</evidence>
<evidence type="ECO:0000305" key="8"/>
<evidence type="ECO:0007744" key="9">
    <source>
    </source>
</evidence>
<keyword id="KW-0002">3D-structure</keyword>
<keyword id="KW-0025">Alternative splicing</keyword>
<keyword id="KW-0903">Direct protein sequencing</keyword>
<keyword id="KW-0488">Methylation</keyword>
<keyword id="KW-0539">Nucleus</keyword>
<keyword id="KW-1267">Proteomics identification</keyword>
<keyword id="KW-1185">Reference proteome</keyword>
<keyword id="KW-0677">Repeat</keyword>
<keyword id="KW-0687">Ribonucleoprotein</keyword>
<keyword id="KW-0694">RNA-binding</keyword>
<comment type="function">
    <text>May be involved in tissue-specific alternative RNA processing events.</text>
</comment>
<comment type="subunit">
    <text evidence="6">Interacts with TDRD3.</text>
</comment>
<comment type="interaction">
    <interactant intactId="EBI-712493">
        <id>P63162</id>
    </interactant>
    <interactant intactId="EBI-768015">
        <id>O95400</id>
        <label>CD2BP2</label>
    </interactant>
    <organismsDiffer>false</organismsDiffer>
    <experiments>6</experiments>
</comment>
<comment type="interaction">
    <interactant intactId="EBI-712493">
        <id>P63162</id>
    </interactant>
    <interactant intactId="EBI-349854">
        <id>P13569</id>
        <label>CFTR</label>
    </interactant>
    <organismsDiffer>false</organismsDiffer>
    <experiments>6</experiments>
</comment>
<comment type="subcellular location">
    <subcellularLocation>
        <location>Nucleus</location>
    </subcellularLocation>
</comment>
<comment type="alternative products">
    <event type="alternative splicing"/>
    <isoform>
        <id>P63162-1</id>
        <name>1</name>
        <sequence type="displayed"/>
    </isoform>
    <isoform>
        <id>P63162-2</id>
        <name>2</name>
        <sequence type="described" ref="VSP_056488"/>
    </isoform>
</comment>
<comment type="tissue specificity">
    <text evidence="5">Expressed in brain and lymphoblasts.</text>
</comment>
<comment type="miscellaneous">
    <text>Encoded on a bicistronic transcript that code for two proteins, SNRPN and SNURF.</text>
</comment>
<comment type="miscellaneous">
    <text>Patients with the autoimmune disease systemic lupus erythematosus (SLE) have autoantibodies directed against some of the individual snRNP polypeptides. The most common autoantigen is called Sm. N bears Sm epitopes.</text>
</comment>
<comment type="similarity">
    <text evidence="8">Belongs to the snRNP SmB/SmN family.</text>
</comment>
<sequence length="240" mass="24614">MTVGKSSKMLQHIDYRMRCILQDGRIFIGTFKAFDKHMNLILCDCDEFRKIKPKNAKQPEREEKRVLGLVLLRGENLVSMTVEGPPPKDTGIARVPLAGAAGGPGVGRAAGRGVPAGVPIPQAPAGLAGPVRGVGGPSQQVMTPQGRGTVAAAAVAATASIAGAPTQYPPGRGTPPPPVGRATPPPGIMAPPPGMRPPMGPPIGLPPARGTPIGMPPPGMRPPPPGIRGPPPPGMRPPRP</sequence>
<feature type="chain" id="PRO_0000125523" description="Small nuclear ribonucleoprotein-associated protein N">
    <location>
        <begin position="1"/>
        <end position="240"/>
    </location>
</feature>
<feature type="domain" description="Sm" evidence="3">
    <location>
        <begin position="4"/>
        <end position="86"/>
    </location>
</feature>
<feature type="repeat">
    <location>
        <begin position="175"/>
        <end position="181"/>
    </location>
</feature>
<feature type="repeat">
    <location>
        <begin position="191"/>
        <end position="196"/>
    </location>
</feature>
<feature type="repeat">
    <location>
        <begin position="216"/>
        <end position="221"/>
    </location>
</feature>
<feature type="repeat">
    <location>
        <begin position="222"/>
        <end position="228"/>
    </location>
</feature>
<feature type="repeat">
    <location>
        <begin position="230"/>
        <end position="236"/>
    </location>
</feature>
<feature type="region of interest" description="Disordered" evidence="4">
    <location>
        <begin position="163"/>
        <end position="240"/>
    </location>
</feature>
<feature type="region of interest" description="Repeat-rich region">
    <location>
        <begin position="175"/>
        <end position="236"/>
    </location>
</feature>
<feature type="compositionally biased region" description="Pro residues" evidence="4">
    <location>
        <begin position="172"/>
        <end position="205"/>
    </location>
</feature>
<feature type="compositionally biased region" description="Pro residues" evidence="4">
    <location>
        <begin position="214"/>
        <end position="240"/>
    </location>
</feature>
<feature type="modified residue" description="Asymmetric dimethylarginine; alternate" evidence="1">
    <location>
        <position position="108"/>
    </location>
</feature>
<feature type="modified residue" description="Dimethylated arginine; alternate" evidence="1">
    <location>
        <position position="108"/>
    </location>
</feature>
<feature type="modified residue" description="Omega-N-methylarginine; alternate" evidence="2">
    <location>
        <position position="108"/>
    </location>
</feature>
<feature type="modified residue" description="Asymmetric dimethylarginine; alternate" evidence="1">
    <location>
        <position position="112"/>
    </location>
</feature>
<feature type="modified residue" description="Dimethylated arginine; alternate" evidence="1">
    <location>
        <position position="112"/>
    </location>
</feature>
<feature type="modified residue" description="Omega-N-methylarginine; alternate" evidence="1">
    <location>
        <position position="112"/>
    </location>
</feature>
<feature type="modified residue" description="Omega-N-methylarginine" evidence="1">
    <location>
        <position position="147"/>
    </location>
</feature>
<feature type="modified residue" description="Omega-N-methylarginine" evidence="9">
    <location>
        <position position="172"/>
    </location>
</feature>
<feature type="splice variant" id="VSP_056488" description="In isoform 2." evidence="7">
    <original>M</original>
    <variation>MMDSQ</variation>
    <location>
        <position position="1"/>
    </location>
</feature>
<feature type="sequence conflict" description="In Ref. 10." evidence="8" ref="10">
    <location>
        <begin position="43"/>
        <end position="44"/>
    </location>
</feature>
<feature type="sequence conflict" description="In Ref. 10." evidence="8" ref="10">
    <original>E</original>
    <variation>Q</variation>
    <location>
        <position position="75"/>
    </location>
</feature>
<reference key="1">
    <citation type="journal article" date="1989" name="Nucleic Acids Res.">
        <title>A comparison of snRNP-associated Sm-autoantigens: human N, rat N and human B/B'.</title>
        <authorList>
            <person name="Schmauss C."/>
            <person name="McAllister G."/>
            <person name="Ohosone Y."/>
            <person name="Hardin J.A."/>
            <person name="Lerner M.R."/>
        </authorList>
    </citation>
    <scope>NUCLEOTIDE SEQUENCE [MRNA] (ISOFORM 1)</scope>
    <source>
        <tissue>Cerebellum</tissue>
    </source>
</reference>
<reference key="2">
    <citation type="journal article" date="1989" name="J. Biol. Chem.">
        <title>Primary structure of a human small nuclear ribonucleoprotein polypeptide as deduced by cDNA analysis.</title>
        <authorList>
            <person name="Rokeach L.A."/>
            <person name="Jannatipour M."/>
            <person name="Haselby J.A."/>
            <person name="Hoch S.O."/>
        </authorList>
    </citation>
    <scope>NUCLEOTIDE SEQUENCE [MRNA] (ISOFORM 1)</scope>
    <scope>PARTIAL PROTEIN SEQUENCE</scope>
</reference>
<reference key="3">
    <citation type="journal article" date="1989" name="Clin. Chem.">
        <title>Expression of the major human ribonucleoprotein (RNP) autoantigens in Escherichia coli and their use in an EIA for screening sera from patients with autoimmune diseases.</title>
        <authorList>
            <person name="Renz M."/>
            <person name="Heim C."/>
            <person name="Braeunling O."/>
            <person name="Czichos A."/>
            <person name="Wieland C."/>
            <person name="Seelig H.P."/>
        </authorList>
    </citation>
    <scope>NUCLEOTIDE SEQUENCE [MRNA] (ISOFORM 1)</scope>
</reference>
<reference key="4">
    <citation type="journal article" date="1996" name="Am. J. Hum. Genet.">
        <title>Gene structure, DNA methylation, and imprinted expression of the human SNRPN gene.</title>
        <authorList>
            <person name="Glenn C.C."/>
            <person name="Saitoh S."/>
            <person name="Jong M.T."/>
            <person name="Filbrandt M.M."/>
            <person name="Surti U."/>
            <person name="Driscoll D.J."/>
            <person name="Nicholls R.D."/>
        </authorList>
    </citation>
    <scope>NUCLEOTIDE SEQUENCE [MRNA] (ISOFORM 1)</scope>
    <source>
        <tissue>Brain</tissue>
    </source>
</reference>
<reference key="5">
    <citation type="submission" date="2001-07" db="EMBL/GenBank/DDBJ databases">
        <authorList>
            <person name="Feng Z."/>
            <person name="Zhang B."/>
            <person name="Peng X."/>
            <person name="Yuan J."/>
            <person name="Qiang B."/>
        </authorList>
    </citation>
    <scope>NUCLEOTIDE SEQUENCE [MRNA] (ISOFORM 1)</scope>
</reference>
<reference key="6">
    <citation type="journal article" date="2004" name="Nat. Genet.">
        <title>Complete sequencing and characterization of 21,243 full-length human cDNAs.</title>
        <authorList>
            <person name="Ota T."/>
            <person name="Suzuki Y."/>
            <person name="Nishikawa T."/>
            <person name="Otsuki T."/>
            <person name="Sugiyama T."/>
            <person name="Irie R."/>
            <person name="Wakamatsu A."/>
            <person name="Hayashi K."/>
            <person name="Sato H."/>
            <person name="Nagai K."/>
            <person name="Kimura K."/>
            <person name="Makita H."/>
            <person name="Sekine M."/>
            <person name="Obayashi M."/>
            <person name="Nishi T."/>
            <person name="Shibahara T."/>
            <person name="Tanaka T."/>
            <person name="Ishii S."/>
            <person name="Yamamoto J."/>
            <person name="Saito K."/>
            <person name="Kawai Y."/>
            <person name="Isono Y."/>
            <person name="Nakamura Y."/>
            <person name="Nagahari K."/>
            <person name="Murakami K."/>
            <person name="Yasuda T."/>
            <person name="Iwayanagi T."/>
            <person name="Wagatsuma M."/>
            <person name="Shiratori A."/>
            <person name="Sudo H."/>
            <person name="Hosoiri T."/>
            <person name="Kaku Y."/>
            <person name="Kodaira H."/>
            <person name="Kondo H."/>
            <person name="Sugawara M."/>
            <person name="Takahashi M."/>
            <person name="Kanda K."/>
            <person name="Yokoi T."/>
            <person name="Furuya T."/>
            <person name="Kikkawa E."/>
            <person name="Omura Y."/>
            <person name="Abe K."/>
            <person name="Kamihara K."/>
            <person name="Katsuta N."/>
            <person name="Sato K."/>
            <person name="Tanikawa M."/>
            <person name="Yamazaki M."/>
            <person name="Ninomiya K."/>
            <person name="Ishibashi T."/>
            <person name="Yamashita H."/>
            <person name="Murakawa K."/>
            <person name="Fujimori K."/>
            <person name="Tanai H."/>
            <person name="Kimata M."/>
            <person name="Watanabe M."/>
            <person name="Hiraoka S."/>
            <person name="Chiba Y."/>
            <person name="Ishida S."/>
            <person name="Ono Y."/>
            <person name="Takiguchi S."/>
            <person name="Watanabe S."/>
            <person name="Yosida M."/>
            <person name="Hotuta T."/>
            <person name="Kusano J."/>
            <person name="Kanehori K."/>
            <person name="Takahashi-Fujii A."/>
            <person name="Hara H."/>
            <person name="Tanase T.-O."/>
            <person name="Nomura Y."/>
            <person name="Togiya S."/>
            <person name="Komai F."/>
            <person name="Hara R."/>
            <person name="Takeuchi K."/>
            <person name="Arita M."/>
            <person name="Imose N."/>
            <person name="Musashino K."/>
            <person name="Yuuki H."/>
            <person name="Oshima A."/>
            <person name="Sasaki N."/>
            <person name="Aotsuka S."/>
            <person name="Yoshikawa Y."/>
            <person name="Matsunawa H."/>
            <person name="Ichihara T."/>
            <person name="Shiohata N."/>
            <person name="Sano S."/>
            <person name="Moriya S."/>
            <person name="Momiyama H."/>
            <person name="Satoh N."/>
            <person name="Takami S."/>
            <person name="Terashima Y."/>
            <person name="Suzuki O."/>
            <person name="Nakagawa S."/>
            <person name="Senoh A."/>
            <person name="Mizoguchi H."/>
            <person name="Goto Y."/>
            <person name="Shimizu F."/>
            <person name="Wakebe H."/>
            <person name="Hishigaki H."/>
            <person name="Watanabe T."/>
            <person name="Sugiyama A."/>
            <person name="Takemoto M."/>
            <person name="Kawakami B."/>
            <person name="Yamazaki M."/>
            <person name="Watanabe K."/>
            <person name="Kumagai A."/>
            <person name="Itakura S."/>
            <person name="Fukuzumi Y."/>
            <person name="Fujimori Y."/>
            <person name="Komiyama M."/>
            <person name="Tashiro H."/>
            <person name="Tanigami A."/>
            <person name="Fujiwara T."/>
            <person name="Ono T."/>
            <person name="Yamada K."/>
            <person name="Fujii Y."/>
            <person name="Ozaki K."/>
            <person name="Hirao M."/>
            <person name="Ohmori Y."/>
            <person name="Kawabata A."/>
            <person name="Hikiji T."/>
            <person name="Kobatake N."/>
            <person name="Inagaki H."/>
            <person name="Ikema Y."/>
            <person name="Okamoto S."/>
            <person name="Okitani R."/>
            <person name="Kawakami T."/>
            <person name="Noguchi S."/>
            <person name="Itoh T."/>
            <person name="Shigeta K."/>
            <person name="Senba T."/>
            <person name="Matsumura K."/>
            <person name="Nakajima Y."/>
            <person name="Mizuno T."/>
            <person name="Morinaga M."/>
            <person name="Sasaki M."/>
            <person name="Togashi T."/>
            <person name="Oyama M."/>
            <person name="Hata H."/>
            <person name="Watanabe M."/>
            <person name="Komatsu T."/>
            <person name="Mizushima-Sugano J."/>
            <person name="Satoh T."/>
            <person name="Shirai Y."/>
            <person name="Takahashi Y."/>
            <person name="Nakagawa K."/>
            <person name="Okumura K."/>
            <person name="Nagase T."/>
            <person name="Nomura N."/>
            <person name="Kikuchi H."/>
            <person name="Masuho Y."/>
            <person name="Yamashita R."/>
            <person name="Nakai K."/>
            <person name="Yada T."/>
            <person name="Nakamura Y."/>
            <person name="Ohara O."/>
            <person name="Isogai T."/>
            <person name="Sugano S."/>
        </authorList>
    </citation>
    <scope>NUCLEOTIDE SEQUENCE [LARGE SCALE MRNA] (ISOFORM 2)</scope>
    <source>
        <tissue>Cerebellum</tissue>
    </source>
</reference>
<reference key="7">
    <citation type="submission" date="2004-05" db="EMBL/GenBank/DDBJ databases">
        <title>Cloning of human full open reading frames in Gateway(TM) system entry vector (pDONR201).</title>
        <authorList>
            <person name="Ebert L."/>
            <person name="Schick M."/>
            <person name="Neubert P."/>
            <person name="Schatten R."/>
            <person name="Henze S."/>
            <person name="Korn B."/>
        </authorList>
    </citation>
    <scope>NUCLEOTIDE SEQUENCE [LARGE SCALE MRNA] (ISOFORM 1)</scope>
</reference>
<reference key="8">
    <citation type="journal article" date="2006" name="Nature">
        <title>Analysis of the DNA sequence and duplication history of human chromosome 15.</title>
        <authorList>
            <person name="Zody M.C."/>
            <person name="Garber M."/>
            <person name="Sharpe T."/>
            <person name="Young S.K."/>
            <person name="Rowen L."/>
            <person name="O'Neill K."/>
            <person name="Whittaker C.A."/>
            <person name="Kamal M."/>
            <person name="Chang J.L."/>
            <person name="Cuomo C.A."/>
            <person name="Dewar K."/>
            <person name="FitzGerald M.G."/>
            <person name="Kodira C.D."/>
            <person name="Madan A."/>
            <person name="Qin S."/>
            <person name="Yang X."/>
            <person name="Abbasi N."/>
            <person name="Abouelleil A."/>
            <person name="Arachchi H.M."/>
            <person name="Baradarani L."/>
            <person name="Birditt B."/>
            <person name="Bloom S."/>
            <person name="Bloom T."/>
            <person name="Borowsky M.L."/>
            <person name="Burke J."/>
            <person name="Butler J."/>
            <person name="Cook A."/>
            <person name="DeArellano K."/>
            <person name="DeCaprio D."/>
            <person name="Dorris L. III"/>
            <person name="Dors M."/>
            <person name="Eichler E.E."/>
            <person name="Engels R."/>
            <person name="Fahey J."/>
            <person name="Fleetwood P."/>
            <person name="Friedman C."/>
            <person name="Gearin G."/>
            <person name="Hall J.L."/>
            <person name="Hensley G."/>
            <person name="Johnson E."/>
            <person name="Jones C."/>
            <person name="Kamat A."/>
            <person name="Kaur A."/>
            <person name="Locke D.P."/>
            <person name="Madan A."/>
            <person name="Munson G."/>
            <person name="Jaffe D.B."/>
            <person name="Lui A."/>
            <person name="Macdonald P."/>
            <person name="Mauceli E."/>
            <person name="Naylor J.W."/>
            <person name="Nesbitt R."/>
            <person name="Nicol R."/>
            <person name="O'Leary S.B."/>
            <person name="Ratcliffe A."/>
            <person name="Rounsley S."/>
            <person name="She X."/>
            <person name="Sneddon K.M.B."/>
            <person name="Stewart S."/>
            <person name="Sougnez C."/>
            <person name="Stone S.M."/>
            <person name="Topham K."/>
            <person name="Vincent D."/>
            <person name="Wang S."/>
            <person name="Zimmer A.R."/>
            <person name="Birren B.W."/>
            <person name="Hood L."/>
            <person name="Lander E.S."/>
            <person name="Nusbaum C."/>
        </authorList>
    </citation>
    <scope>NUCLEOTIDE SEQUENCE [LARGE SCALE GENOMIC DNA]</scope>
</reference>
<reference key="9">
    <citation type="journal article" date="2004" name="Genome Res.">
        <title>The status, quality, and expansion of the NIH full-length cDNA project: the Mammalian Gene Collection (MGC).</title>
        <authorList>
            <consortium name="The MGC Project Team"/>
        </authorList>
    </citation>
    <scope>NUCLEOTIDE SEQUENCE [LARGE SCALE MRNA] (ISOFORM 1)</scope>
    <source>
        <tissue>Brain</tissue>
        <tissue>Kidney</tissue>
        <tissue>Uterus</tissue>
    </source>
</reference>
<reference key="10">
    <citation type="journal article" date="1993" name="Biochem. Biophys. Res. Commun.">
        <title>Isolation and structural characterization of the rat gene encoding the brain specific snRNP-associated polypeptide 'N'.</title>
        <authorList>
            <person name="Esposito F."/>
            <person name="Fiore F."/>
            <person name="Cimino F."/>
            <person name="Russo T."/>
        </authorList>
    </citation>
    <scope>NUCLEOTIDE SEQUENCE [MRNA] OF 1-140 (ISOFORM 1)</scope>
</reference>
<reference key="11">
    <citation type="journal article" date="1989" name="FEBS Lett.">
        <title>Isolation of cDNA clones encoding the human Sm B/B' auto-immune antigen and specifically reacting with human anti-Sm auto-immune sera.</title>
        <authorList>
            <person name="Sharpe N.G."/>
            <person name="Williams D.G."/>
            <person name="Howarth D.N."/>
            <person name="Coles B."/>
            <person name="Latchman D.S."/>
        </authorList>
    </citation>
    <scope>NUCLEOTIDE SEQUENCE [MRNA] OF 23-218 (ISOFORM 1)</scope>
</reference>
<reference key="12">
    <citation type="journal article" date="1999" name="Proc. Natl. Acad. Sci. U.S.A.">
        <title>An imprinted, mammalian bicistronic transcript encodes two independent proteins.</title>
        <authorList>
            <person name="Gray T.A."/>
            <person name="Saitoh S."/>
            <person name="Nicholls R.D."/>
        </authorList>
    </citation>
    <scope>TISSUE SPECIFICITY</scope>
</reference>
<reference key="13">
    <citation type="journal article" date="2005" name="J. Biol. Chem.">
        <title>Tudor domains bind symmetrical dimethylated arginines.</title>
        <authorList>
            <person name="Cote J."/>
            <person name="Richard S."/>
        </authorList>
    </citation>
    <scope>INTERACTION WITH TDRD3</scope>
</reference>
<reference key="14">
    <citation type="journal article" date="2014" name="Mol. Cell. Proteomics">
        <title>Immunoaffinity enrichment and mass spectrometry analysis of protein methylation.</title>
        <authorList>
            <person name="Guo A."/>
            <person name="Gu H."/>
            <person name="Zhou J."/>
            <person name="Mulhern D."/>
            <person name="Wang Y."/>
            <person name="Lee K.A."/>
            <person name="Yang V."/>
            <person name="Aguiar M."/>
            <person name="Kornhauser J."/>
            <person name="Jia X."/>
            <person name="Ren J."/>
            <person name="Beausoleil S.A."/>
            <person name="Silva J.C."/>
            <person name="Vemulapalli V."/>
            <person name="Bedford M.T."/>
            <person name="Comb M.J."/>
        </authorList>
    </citation>
    <scope>METHYLATION [LARGE SCALE ANALYSIS] AT ARG-172</scope>
    <scope>IDENTIFICATION BY MASS SPECTROMETRY [LARGE SCALE ANALYSIS]</scope>
    <source>
        <tissue>Colon carcinoma</tissue>
    </source>
</reference>
<accession>P63162</accession>
<accession>B3KVR1</accession>
<accession>P14648</accession>
<accession>P17135</accession>
<accession>Q0D2Q5</accession>
<name>RSMN_HUMAN</name>
<dbReference type="EMBL" id="X15892">
    <property type="protein sequence ID" value="CAA33901.1"/>
    <property type="molecule type" value="mRNA"/>
</dbReference>
<dbReference type="EMBL" id="J04615">
    <property type="protein sequence ID" value="AAA36617.1"/>
    <property type="molecule type" value="mRNA"/>
</dbReference>
<dbReference type="EMBL" id="U41303">
    <property type="protein sequence ID" value="AAA98969.1"/>
    <property type="molecule type" value="mRNA"/>
</dbReference>
<dbReference type="EMBL" id="AF400432">
    <property type="protein sequence ID" value="AAK92481.1"/>
    <property type="molecule type" value="mRNA"/>
</dbReference>
<dbReference type="EMBL" id="AK123119">
    <property type="protein sequence ID" value="BAG53873.1"/>
    <property type="molecule type" value="mRNA"/>
</dbReference>
<dbReference type="EMBL" id="CR450350">
    <property type="protein sequence ID" value="CAG29346.1"/>
    <property type="molecule type" value="mRNA"/>
</dbReference>
<dbReference type="EMBL" id="AC090602">
    <property type="status" value="NOT_ANNOTATED_CDS"/>
    <property type="molecule type" value="Genomic_DNA"/>
</dbReference>
<dbReference type="EMBL" id="AC090983">
    <property type="status" value="NOT_ANNOTATED_CDS"/>
    <property type="molecule type" value="Genomic_DNA"/>
</dbReference>
<dbReference type="EMBL" id="AC124312">
    <property type="status" value="NOT_ANNOTATED_CDS"/>
    <property type="molecule type" value="Genomic_DNA"/>
</dbReference>
<dbReference type="EMBL" id="BC000611">
    <property type="protein sequence ID" value="AAH00611.1"/>
    <property type="molecule type" value="mRNA"/>
</dbReference>
<dbReference type="EMBL" id="BC003180">
    <property type="protein sequence ID" value="AAH03180.1"/>
    <property type="molecule type" value="mRNA"/>
</dbReference>
<dbReference type="EMBL" id="BC024777">
    <property type="protein sequence ID" value="AAH24777.1"/>
    <property type="molecule type" value="mRNA"/>
</dbReference>
<dbReference type="EMBL" id="BC025178">
    <property type="protein sequence ID" value="AAH25178.1"/>
    <property type="molecule type" value="mRNA"/>
</dbReference>
<dbReference type="CCDS" id="CCDS10017.1">
    <molecule id="P63162-1"/>
</dbReference>
<dbReference type="CCDS" id="CCDS91965.1">
    <molecule id="P63162-2"/>
</dbReference>
<dbReference type="PIR" id="A33270">
    <property type="entry name" value="A33270"/>
</dbReference>
<dbReference type="RefSeq" id="NP_001336383.1">
    <molecule id="P63162-1"/>
    <property type="nucleotide sequence ID" value="NM_001349454.2"/>
</dbReference>
<dbReference type="RefSeq" id="NP_001336384.1">
    <molecule id="P63162-1"/>
    <property type="nucleotide sequence ID" value="NM_001349455.2"/>
</dbReference>
<dbReference type="RefSeq" id="NP_001336385.1">
    <molecule id="P63162-1"/>
    <property type="nucleotide sequence ID" value="NM_001349456.2"/>
</dbReference>
<dbReference type="RefSeq" id="NP_001336386.1">
    <molecule id="P63162-1"/>
    <property type="nucleotide sequence ID" value="NM_001349457.2"/>
</dbReference>
<dbReference type="RefSeq" id="NP_001336387.1">
    <molecule id="P63162-1"/>
    <property type="nucleotide sequence ID" value="NM_001349458.2"/>
</dbReference>
<dbReference type="RefSeq" id="NP_001336388.1">
    <molecule id="P63162-1"/>
    <property type="nucleotide sequence ID" value="NM_001349459.2"/>
</dbReference>
<dbReference type="RefSeq" id="NP_001336389.1">
    <molecule id="P63162-1"/>
    <property type="nucleotide sequence ID" value="NM_001349460.2"/>
</dbReference>
<dbReference type="RefSeq" id="NP_001336390.1">
    <molecule id="P63162-1"/>
    <property type="nucleotide sequence ID" value="NM_001349461.2"/>
</dbReference>
<dbReference type="RefSeq" id="NP_001336391.1">
    <molecule id="P63162-1"/>
    <property type="nucleotide sequence ID" value="NM_001349462.2"/>
</dbReference>
<dbReference type="RefSeq" id="NP_001336392.1">
    <molecule id="P63162-1"/>
    <property type="nucleotide sequence ID" value="NM_001349463.2"/>
</dbReference>
<dbReference type="RefSeq" id="NP_001336393.1">
    <molecule id="P63162-1"/>
    <property type="nucleotide sequence ID" value="NM_001349464.2"/>
</dbReference>
<dbReference type="RefSeq" id="NP_001336394.1">
    <molecule id="P63162-1"/>
    <property type="nucleotide sequence ID" value="NM_001349465.2"/>
</dbReference>
<dbReference type="RefSeq" id="NP_001365178.1">
    <molecule id="P63162-1"/>
    <property type="nucleotide sequence ID" value="NM_001378249.1"/>
</dbReference>
<dbReference type="RefSeq" id="NP_001365180.1">
    <molecule id="P63162-2"/>
    <property type="nucleotide sequence ID" value="NM_001378251.1"/>
</dbReference>
<dbReference type="RefSeq" id="NP_001365181.1">
    <molecule id="P63162-2"/>
    <property type="nucleotide sequence ID" value="NM_001378252.1"/>
</dbReference>
<dbReference type="RefSeq" id="NP_001365182.1">
    <molecule id="P63162-2"/>
    <property type="nucleotide sequence ID" value="NM_001378253.1"/>
</dbReference>
<dbReference type="RefSeq" id="NP_001365183.1">
    <molecule id="P63162-2"/>
    <property type="nucleotide sequence ID" value="NM_001378254.1"/>
</dbReference>
<dbReference type="RefSeq" id="NP_001365184.1">
    <molecule id="P63162-2"/>
    <property type="nucleotide sequence ID" value="NM_001378255.1"/>
</dbReference>
<dbReference type="RefSeq" id="NP_001387563.1">
    <molecule id="P63162-1"/>
    <property type="nucleotide sequence ID" value="NM_001400634.1"/>
</dbReference>
<dbReference type="RefSeq" id="NP_001387564.1">
    <molecule id="P63162-1"/>
    <property type="nucleotide sequence ID" value="NM_001400635.1"/>
</dbReference>
<dbReference type="RefSeq" id="NP_001387565.1">
    <molecule id="P63162-1"/>
    <property type="nucleotide sequence ID" value="NM_001400636.1"/>
</dbReference>
<dbReference type="RefSeq" id="NP_001387566.1">
    <molecule id="P63162-1"/>
    <property type="nucleotide sequence ID" value="NM_001400637.1"/>
</dbReference>
<dbReference type="RefSeq" id="NP_001387567.1">
    <molecule id="P63162-1"/>
    <property type="nucleotide sequence ID" value="NM_001400638.1"/>
</dbReference>
<dbReference type="RefSeq" id="NP_001387568.1">
    <molecule id="P63162-1"/>
    <property type="nucleotide sequence ID" value="NM_001400639.1"/>
</dbReference>
<dbReference type="RefSeq" id="NP_001387569.1">
    <molecule id="P63162-1"/>
    <property type="nucleotide sequence ID" value="NM_001400640.1"/>
</dbReference>
<dbReference type="RefSeq" id="NP_001387570.1">
    <molecule id="P63162-1"/>
    <property type="nucleotide sequence ID" value="NM_001400641.1"/>
</dbReference>
<dbReference type="RefSeq" id="NP_001387572.1">
    <molecule id="P63162-1"/>
    <property type="nucleotide sequence ID" value="NM_001400643.1"/>
</dbReference>
<dbReference type="RefSeq" id="NP_001387573.1">
    <molecule id="P63162-1"/>
    <property type="nucleotide sequence ID" value="NM_001400644.1"/>
</dbReference>
<dbReference type="RefSeq" id="NP_001387575.1">
    <molecule id="P63162-1"/>
    <property type="nucleotide sequence ID" value="NM_001400646.1"/>
</dbReference>
<dbReference type="RefSeq" id="NP_001387576.1">
    <molecule id="P63162-1"/>
    <property type="nucleotide sequence ID" value="NM_001400647.1"/>
</dbReference>
<dbReference type="RefSeq" id="NP_001387578.1">
    <molecule id="P63162-1"/>
    <property type="nucleotide sequence ID" value="NM_001400649.1"/>
</dbReference>
<dbReference type="RefSeq" id="NP_001387579.1">
    <molecule id="P63162-1"/>
    <property type="nucleotide sequence ID" value="NM_001400650.1"/>
</dbReference>
<dbReference type="RefSeq" id="NP_001387581.1">
    <molecule id="P63162-1"/>
    <property type="nucleotide sequence ID" value="NM_001400652.1"/>
</dbReference>
<dbReference type="RefSeq" id="NP_001387612.1">
    <molecule id="P63162-1"/>
    <property type="nucleotide sequence ID" value="NM_001400683.1"/>
</dbReference>
<dbReference type="RefSeq" id="NP_001387613.1">
    <molecule id="P63162-1"/>
    <property type="nucleotide sequence ID" value="NM_001400684.1"/>
</dbReference>
<dbReference type="RefSeq" id="NP_001387614.1">
    <molecule id="P63162-1"/>
    <property type="nucleotide sequence ID" value="NM_001400685.1"/>
</dbReference>
<dbReference type="RefSeq" id="NP_001387615.1">
    <molecule id="P63162-1"/>
    <property type="nucleotide sequence ID" value="NM_001400686.1"/>
</dbReference>
<dbReference type="RefSeq" id="NP_001387616.1">
    <molecule id="P63162-1"/>
    <property type="nucleotide sequence ID" value="NM_001400687.1"/>
</dbReference>
<dbReference type="RefSeq" id="NP_001387617.1">
    <molecule id="P63162-1"/>
    <property type="nucleotide sequence ID" value="NM_001400688.1"/>
</dbReference>
<dbReference type="RefSeq" id="NP_001387618.1">
    <molecule id="P63162-1"/>
    <property type="nucleotide sequence ID" value="NM_001400689.1"/>
</dbReference>
<dbReference type="RefSeq" id="NP_001387619.1">
    <molecule id="P63162-1"/>
    <property type="nucleotide sequence ID" value="NM_001400690.1"/>
</dbReference>
<dbReference type="RefSeq" id="NP_001387620.1">
    <molecule id="P63162-1"/>
    <property type="nucleotide sequence ID" value="NM_001400691.1"/>
</dbReference>
<dbReference type="RefSeq" id="NP_001387621.1">
    <molecule id="P63162-1"/>
    <property type="nucleotide sequence ID" value="NM_001400692.1"/>
</dbReference>
<dbReference type="RefSeq" id="NP_001387622.1">
    <molecule id="P63162-1"/>
    <property type="nucleotide sequence ID" value="NM_001400693.1"/>
</dbReference>
<dbReference type="RefSeq" id="NP_001387623.1">
    <molecule id="P63162-1"/>
    <property type="nucleotide sequence ID" value="NM_001400694.1"/>
</dbReference>
<dbReference type="RefSeq" id="NP_001387624.1">
    <molecule id="P63162-1"/>
    <property type="nucleotide sequence ID" value="NM_001400695.1"/>
</dbReference>
<dbReference type="RefSeq" id="NP_001387625.1">
    <molecule id="P63162-1"/>
    <property type="nucleotide sequence ID" value="NM_001400696.1"/>
</dbReference>
<dbReference type="RefSeq" id="NP_001387626.1">
    <molecule id="P63162-1"/>
    <property type="nucleotide sequence ID" value="NM_001400697.1"/>
</dbReference>
<dbReference type="RefSeq" id="NP_001387627.1">
    <molecule id="P63162-1"/>
    <property type="nucleotide sequence ID" value="NM_001400698.1"/>
</dbReference>
<dbReference type="RefSeq" id="NP_001387630.1">
    <molecule id="P63162-1"/>
    <property type="nucleotide sequence ID" value="NM_001400701.1"/>
</dbReference>
<dbReference type="RefSeq" id="NP_001387631.1">
    <molecule id="P63162-1"/>
    <property type="nucleotide sequence ID" value="NM_001400702.1"/>
</dbReference>
<dbReference type="RefSeq" id="NP_001387632.1">
    <molecule id="P63162-1"/>
    <property type="nucleotide sequence ID" value="NM_001400703.1"/>
</dbReference>
<dbReference type="RefSeq" id="NP_001387633.1">
    <molecule id="P63162-1"/>
    <property type="nucleotide sequence ID" value="NM_001400704.1"/>
</dbReference>
<dbReference type="RefSeq" id="NP_001387635.1">
    <molecule id="P63162-1"/>
    <property type="nucleotide sequence ID" value="NM_001400706.1"/>
</dbReference>
<dbReference type="RefSeq" id="NP_001387637.1">
    <molecule id="P63162-1"/>
    <property type="nucleotide sequence ID" value="NM_001400708.1"/>
</dbReference>
<dbReference type="RefSeq" id="NP_001387639.1">
    <molecule id="P63162-1"/>
    <property type="nucleotide sequence ID" value="NM_001400710.1"/>
</dbReference>
<dbReference type="RefSeq" id="NP_001387641.1">
    <molecule id="P63162-1"/>
    <property type="nucleotide sequence ID" value="NM_001400712.1"/>
</dbReference>
<dbReference type="RefSeq" id="NP_001387642.1">
    <molecule id="P63162-1"/>
    <property type="nucleotide sequence ID" value="NM_001400713.1"/>
</dbReference>
<dbReference type="RefSeq" id="NP_001387644.1">
    <molecule id="P63162-1"/>
    <property type="nucleotide sequence ID" value="NM_001400715.1"/>
</dbReference>
<dbReference type="RefSeq" id="NP_001387645.1">
    <molecule id="P63162-1"/>
    <property type="nucleotide sequence ID" value="NM_001400716.1"/>
</dbReference>
<dbReference type="RefSeq" id="NP_001387646.1">
    <molecule id="P63162-1"/>
    <property type="nucleotide sequence ID" value="NM_001400717.1"/>
</dbReference>
<dbReference type="RefSeq" id="NP_001387647.1">
    <molecule id="P63162-1"/>
    <property type="nucleotide sequence ID" value="NM_001400718.1"/>
</dbReference>
<dbReference type="RefSeq" id="NP_001387648.1">
    <molecule id="P63162-1"/>
    <property type="nucleotide sequence ID" value="NM_001400719.1"/>
</dbReference>
<dbReference type="RefSeq" id="NP_001387649.1">
    <molecule id="P63162-1"/>
    <property type="nucleotide sequence ID" value="NM_001400720.1"/>
</dbReference>
<dbReference type="RefSeq" id="NP_001387650.1">
    <molecule id="P63162-1"/>
    <property type="nucleotide sequence ID" value="NM_001400721.1"/>
</dbReference>
<dbReference type="RefSeq" id="NP_001387651.1">
    <molecule id="P63162-1"/>
    <property type="nucleotide sequence ID" value="NM_001400722.1"/>
</dbReference>
<dbReference type="RefSeq" id="NP_001387652.1">
    <molecule id="P63162-1"/>
    <property type="nucleotide sequence ID" value="NM_001400723.1"/>
</dbReference>
<dbReference type="RefSeq" id="NP_001387653.1">
    <molecule id="P63162-1"/>
    <property type="nucleotide sequence ID" value="NM_001400724.1"/>
</dbReference>
<dbReference type="RefSeq" id="NP_001387654.1">
    <molecule id="P63162-1"/>
    <property type="nucleotide sequence ID" value="NM_001400725.1"/>
</dbReference>
<dbReference type="RefSeq" id="NP_001387655.1">
    <molecule id="P63162-1"/>
    <property type="nucleotide sequence ID" value="NM_001400726.1"/>
</dbReference>
<dbReference type="RefSeq" id="NP_001387656.1">
    <molecule id="P63162-1"/>
    <property type="nucleotide sequence ID" value="NM_001400727.1"/>
</dbReference>
<dbReference type="RefSeq" id="NP_001387657.1">
    <molecule id="P63162-1"/>
    <property type="nucleotide sequence ID" value="NM_001400728.1"/>
</dbReference>
<dbReference type="RefSeq" id="NP_001387658.1">
    <molecule id="P63162-1"/>
    <property type="nucleotide sequence ID" value="NM_001400729.1"/>
</dbReference>
<dbReference type="RefSeq" id="NP_001387659.1">
    <molecule id="P63162-1"/>
    <property type="nucleotide sequence ID" value="NM_001400730.1"/>
</dbReference>
<dbReference type="RefSeq" id="NP_001387660.1">
    <molecule id="P63162-1"/>
    <property type="nucleotide sequence ID" value="NM_001400731.1"/>
</dbReference>
<dbReference type="RefSeq" id="NP_001387661.1">
    <molecule id="P63162-1"/>
    <property type="nucleotide sequence ID" value="NM_001400732.1"/>
</dbReference>
<dbReference type="RefSeq" id="NP_001387662.1">
    <molecule id="P63162-1"/>
    <property type="nucleotide sequence ID" value="NM_001400733.1"/>
</dbReference>
<dbReference type="RefSeq" id="NP_001387663.1">
    <molecule id="P63162-1"/>
    <property type="nucleotide sequence ID" value="NM_001400734.1"/>
</dbReference>
<dbReference type="RefSeq" id="NP_001387664.1">
    <molecule id="P63162-1"/>
    <property type="nucleotide sequence ID" value="NM_001400735.1"/>
</dbReference>
<dbReference type="RefSeq" id="NP_001387665.1">
    <molecule id="P63162-1"/>
    <property type="nucleotide sequence ID" value="NM_001400736.1"/>
</dbReference>
<dbReference type="RefSeq" id="NP_001387666.1">
    <molecule id="P63162-1"/>
    <property type="nucleotide sequence ID" value="NM_001400737.1"/>
</dbReference>
<dbReference type="RefSeq" id="NP_001387667.1">
    <molecule id="P63162-1"/>
    <property type="nucleotide sequence ID" value="NM_001400738.1"/>
</dbReference>
<dbReference type="RefSeq" id="NP_001387668.1">
    <molecule id="P63162-1"/>
    <property type="nucleotide sequence ID" value="NM_001400739.1"/>
</dbReference>
<dbReference type="RefSeq" id="NP_001387669.1">
    <molecule id="P63162-1"/>
    <property type="nucleotide sequence ID" value="NM_001400740.1"/>
</dbReference>
<dbReference type="RefSeq" id="NP_001387670.1">
    <molecule id="P63162-1"/>
    <property type="nucleotide sequence ID" value="NM_001400741.1"/>
</dbReference>
<dbReference type="RefSeq" id="NP_001387671.1">
    <molecule id="P63162-1"/>
    <property type="nucleotide sequence ID" value="NM_001400742.1"/>
</dbReference>
<dbReference type="RefSeq" id="NP_001387672.1">
    <molecule id="P63162-1"/>
    <property type="nucleotide sequence ID" value="NM_001400743.1"/>
</dbReference>
<dbReference type="RefSeq" id="NP_001387673.1">
    <molecule id="P63162-1"/>
    <property type="nucleotide sequence ID" value="NM_001400744.1"/>
</dbReference>
<dbReference type="RefSeq" id="NP_001387674.1">
    <molecule id="P63162-1"/>
    <property type="nucleotide sequence ID" value="NM_001400745.1"/>
</dbReference>
<dbReference type="RefSeq" id="NP_001387675.1">
    <molecule id="P63162-1"/>
    <property type="nucleotide sequence ID" value="NM_001400746.1"/>
</dbReference>
<dbReference type="RefSeq" id="NP_001387676.1">
    <molecule id="P63162-1"/>
    <property type="nucleotide sequence ID" value="NM_001400747.1"/>
</dbReference>
<dbReference type="RefSeq" id="NP_001387677.1">
    <molecule id="P63162-1"/>
    <property type="nucleotide sequence ID" value="NM_001400748.1"/>
</dbReference>
<dbReference type="RefSeq" id="NP_001387682.1">
    <molecule id="P63162-1"/>
    <property type="nucleotide sequence ID" value="NM_001400753.1"/>
</dbReference>
<dbReference type="RefSeq" id="NP_001387683.1">
    <molecule id="P63162-1"/>
    <property type="nucleotide sequence ID" value="NM_001400754.1"/>
</dbReference>
<dbReference type="RefSeq" id="NP_001387684.1">
    <molecule id="P63162-1"/>
    <property type="nucleotide sequence ID" value="NM_001400755.1"/>
</dbReference>
<dbReference type="RefSeq" id="NP_001387685.1">
    <molecule id="P63162-1"/>
    <property type="nucleotide sequence ID" value="NM_001400756.1"/>
</dbReference>
<dbReference type="RefSeq" id="NP_001387686.1">
    <molecule id="P63162-1"/>
    <property type="nucleotide sequence ID" value="NM_001400757.1"/>
</dbReference>
<dbReference type="RefSeq" id="NP_001387687.1">
    <molecule id="P63162-1"/>
    <property type="nucleotide sequence ID" value="NM_001400758.1"/>
</dbReference>
<dbReference type="RefSeq" id="NP_001387688.1">
    <molecule id="P63162-1"/>
    <property type="nucleotide sequence ID" value="NM_001400759.1"/>
</dbReference>
<dbReference type="RefSeq" id="NP_001387691.1">
    <molecule id="P63162-1"/>
    <property type="nucleotide sequence ID" value="NM_001400762.1"/>
</dbReference>
<dbReference type="RefSeq" id="NP_001387692.1">
    <molecule id="P63162-1"/>
    <property type="nucleotide sequence ID" value="NM_001400763.1"/>
</dbReference>
<dbReference type="RefSeq" id="NP_003088.1">
    <molecule id="P63162-1"/>
    <property type="nucleotide sequence ID" value="NM_003097.6"/>
</dbReference>
<dbReference type="RefSeq" id="NP_073716.1">
    <molecule id="P63162-1"/>
    <property type="nucleotide sequence ID" value="NM_022805.5"/>
</dbReference>
<dbReference type="RefSeq" id="NP_073717.1">
    <molecule id="P63162-1"/>
    <property type="nucleotide sequence ID" value="NM_022806.5"/>
</dbReference>
<dbReference type="RefSeq" id="NP_073718.1">
    <molecule id="P63162-1"/>
    <property type="nucleotide sequence ID" value="NM_022807.5"/>
</dbReference>
<dbReference type="RefSeq" id="NP_073719.1">
    <molecule id="P63162-1"/>
    <property type="nucleotide sequence ID" value="NM_022808.5"/>
</dbReference>
<dbReference type="PDB" id="5MF9">
    <property type="method" value="NMR"/>
    <property type="chains" value="B=219-225"/>
</dbReference>
<dbReference type="PDB" id="8TBP">
    <property type="method" value="X-ray"/>
    <property type="resolution" value="3.13 A"/>
    <property type="chains" value="E/F=65-79"/>
</dbReference>
<dbReference type="PDBsum" id="5MF9"/>
<dbReference type="PDBsum" id="8TBP"/>
<dbReference type="SMR" id="P63162"/>
<dbReference type="BioGRID" id="112522">
    <property type="interactions" value="190"/>
</dbReference>
<dbReference type="CORUM" id="P63162"/>
<dbReference type="FunCoup" id="P63162">
    <property type="interactions" value="1163"/>
</dbReference>
<dbReference type="IntAct" id="P63162">
    <property type="interactions" value="127"/>
</dbReference>
<dbReference type="MINT" id="P63162"/>
<dbReference type="STRING" id="9606.ENSP00000494831"/>
<dbReference type="GlyGen" id="P63162">
    <property type="glycosylation" value="1 site, 1 O-linked glycan (1 site)"/>
</dbReference>
<dbReference type="iPTMnet" id="P63162"/>
<dbReference type="MetOSite" id="P63162"/>
<dbReference type="PhosphoSitePlus" id="P63162"/>
<dbReference type="SwissPalm" id="P63162"/>
<dbReference type="BioMuta" id="SNRPN"/>
<dbReference type="DMDM" id="52783794"/>
<dbReference type="jPOST" id="P63162"/>
<dbReference type="MassIVE" id="P63162"/>
<dbReference type="PaxDb" id="9606-ENSP00000382972"/>
<dbReference type="PeptideAtlas" id="P63162"/>
<dbReference type="ProteomicsDB" id="3764"/>
<dbReference type="ProteomicsDB" id="57499">
    <molecule id="P63162-1"/>
</dbReference>
<dbReference type="Pumba" id="P63162"/>
<dbReference type="Antibodypedia" id="22280">
    <property type="antibodies" value="161 antibodies from 26 providers"/>
</dbReference>
<dbReference type="DNASU" id="6638"/>
<dbReference type="Ensembl" id="ENST00000346403.10">
    <molecule id="P63162-1"/>
    <property type="protein sequence ID" value="ENSP00000306223.10"/>
    <property type="gene ID" value="ENSG00000128739.23"/>
</dbReference>
<dbReference type="Ensembl" id="ENST00000390687.9">
    <molecule id="P63162-1"/>
    <property type="protein sequence ID" value="ENSP00000375105.4"/>
    <property type="gene ID" value="ENSG00000128739.23"/>
</dbReference>
<dbReference type="Ensembl" id="ENST00000400097.5">
    <molecule id="P63162-1"/>
    <property type="protein sequence ID" value="ENSP00000382969.1"/>
    <property type="gene ID" value="ENSG00000128739.23"/>
</dbReference>
<dbReference type="Ensembl" id="ENST00000400100.5">
    <molecule id="P63162-1"/>
    <property type="protein sequence ID" value="ENSP00000382972.1"/>
    <property type="gene ID" value="ENSG00000128739.23"/>
</dbReference>
<dbReference type="Ensembl" id="ENST00000554227.6">
    <molecule id="P63162-2"/>
    <property type="protein sequence ID" value="ENSP00000452342.2"/>
    <property type="gene ID" value="ENSG00000128739.23"/>
</dbReference>
<dbReference type="Ensembl" id="ENST00000577565.1">
    <molecule id="P63162-1"/>
    <property type="protein sequence ID" value="ENSP00000463458.1"/>
    <property type="gene ID" value="ENSG00000128739.23"/>
</dbReference>
<dbReference type="Ensembl" id="ENST00000642807.1">
    <molecule id="P63162-1"/>
    <property type="protein sequence ID" value="ENSP00000495345.1"/>
    <property type="gene ID" value="ENSG00000128739.23"/>
</dbReference>
<dbReference type="Ensembl" id="ENST00000645002.1">
    <molecule id="P63162-1"/>
    <property type="protein sequence ID" value="ENSP00000494831.1"/>
    <property type="gene ID" value="ENSG00000128739.23"/>
</dbReference>
<dbReference type="GeneID" id="6638"/>
<dbReference type="KEGG" id="hsa:6638"/>
<dbReference type="KEGG" id="hsa:8926"/>
<dbReference type="MANE-Select" id="ENST00000390687.9">
    <property type="protein sequence ID" value="ENSP00000375105.4"/>
    <property type="RefSeq nucleotide sequence ID" value="NM_003097.6"/>
    <property type="RefSeq protein sequence ID" value="NP_003088.1"/>
</dbReference>
<dbReference type="UCSC" id="uc059gty.1">
    <molecule id="P63162-1"/>
    <property type="organism name" value="human"/>
</dbReference>
<dbReference type="AGR" id="HGNC:11164"/>
<dbReference type="AGR" id="HGNC:11171"/>
<dbReference type="CTD" id="6638"/>
<dbReference type="CTD" id="8926"/>
<dbReference type="DisGeNET" id="6638"/>
<dbReference type="DisGeNET" id="8926"/>
<dbReference type="GeneCards" id="SNRPN"/>
<dbReference type="GeneReviews" id="SNRPN"/>
<dbReference type="HGNC" id="HGNC:11164">
    <property type="gene designation" value="SNRPN"/>
</dbReference>
<dbReference type="HPA" id="ENSG00000128739">
    <property type="expression patterns" value="Low tissue specificity"/>
</dbReference>
<dbReference type="MalaCards" id="SNRPN"/>
<dbReference type="MIM" id="182279">
    <property type="type" value="gene"/>
</dbReference>
<dbReference type="neXtProt" id="NX_P63162"/>
<dbReference type="OpenTargets" id="ENSG00000128739"/>
<dbReference type="Orphanet" id="411515">
    <property type="disease" value="Angelman syndrome due to imprinting defect in 15q11-q13"/>
</dbReference>
<dbReference type="Orphanet" id="177910">
    <property type="disease" value="Prader-Willi syndrome due to imprinting mutation"/>
</dbReference>
<dbReference type="Orphanet" id="98754">
    <property type="disease" value="Prader-Willi syndrome due to maternal uniparental disomy of chromosome 15"/>
</dbReference>
<dbReference type="Orphanet" id="177901">
    <property type="disease" value="Prader-Willi syndrome due to paternal deletion of 15q11q13 type 1"/>
</dbReference>
<dbReference type="Orphanet" id="177904">
    <property type="disease" value="Prader-Willi syndrome due to paternal deletion of 15q11q13 type 2"/>
</dbReference>
<dbReference type="Orphanet" id="177907">
    <property type="disease" value="Prader-Willi syndrome due to translocation"/>
</dbReference>
<dbReference type="PharmGKB" id="PA36005"/>
<dbReference type="VEuPathDB" id="HostDB:ENSG00000128739"/>
<dbReference type="eggNOG" id="KOG3168">
    <property type="taxonomic scope" value="Eukaryota"/>
</dbReference>
<dbReference type="GeneTree" id="ENSGT00940000158222"/>
<dbReference type="HOGENOM" id="CLU_076902_1_0_1"/>
<dbReference type="InParanoid" id="P63162"/>
<dbReference type="OMA" id="MGTTKMV"/>
<dbReference type="OrthoDB" id="2020720at2759"/>
<dbReference type="PAN-GO" id="P63162">
    <property type="GO annotations" value="9 GO annotations based on evolutionary models"/>
</dbReference>
<dbReference type="PhylomeDB" id="P63162"/>
<dbReference type="TreeFam" id="TF314232"/>
<dbReference type="PathwayCommons" id="P63162"/>
<dbReference type="Reactome" id="R-HSA-72163">
    <property type="pathway name" value="mRNA Splicing - Major Pathway"/>
</dbReference>
<dbReference type="SignaLink" id="P63162"/>
<dbReference type="SIGNOR" id="P63162"/>
<dbReference type="BioGRID-ORCS" id="6638">
    <property type="hits" value="12 hits in 1145 CRISPR screens"/>
</dbReference>
<dbReference type="BioGRID-ORCS" id="8926">
    <property type="hits" value="5 hits in 1127 CRISPR screens"/>
</dbReference>
<dbReference type="CD-CODE" id="232F8A39">
    <property type="entry name" value="P-body"/>
</dbReference>
<dbReference type="CD-CODE" id="6F24707C">
    <property type="entry name" value="Cajal body"/>
</dbReference>
<dbReference type="ChiTaRS" id="SNRPN">
    <property type="organism name" value="human"/>
</dbReference>
<dbReference type="GeneWiki" id="Small_nuclear_ribonucleoprotein_polypeptide_N"/>
<dbReference type="Pharos" id="P63162">
    <property type="development level" value="Tbio"/>
</dbReference>
<dbReference type="PRO" id="PR:P63162"/>
<dbReference type="Proteomes" id="UP000005640">
    <property type="component" value="Chromosome 15"/>
</dbReference>
<dbReference type="RNAct" id="P63162">
    <property type="molecule type" value="protein"/>
</dbReference>
<dbReference type="Bgee" id="ENSG00000128739">
    <property type="expression patterns" value="Expressed in superior frontal gyrus and 101 other cell types or tissues"/>
</dbReference>
<dbReference type="ExpressionAtlas" id="P63162">
    <property type="expression patterns" value="baseline and differential"/>
</dbReference>
<dbReference type="GO" id="GO:0071013">
    <property type="term" value="C:catalytic step 2 spliceosome"/>
    <property type="evidence" value="ECO:0000318"/>
    <property type="project" value="GO_Central"/>
</dbReference>
<dbReference type="GO" id="GO:0005737">
    <property type="term" value="C:cytoplasm"/>
    <property type="evidence" value="ECO:0000318"/>
    <property type="project" value="GO_Central"/>
</dbReference>
<dbReference type="GO" id="GO:0005654">
    <property type="term" value="C:nucleoplasm"/>
    <property type="evidence" value="ECO:0000314"/>
    <property type="project" value="HPA"/>
</dbReference>
<dbReference type="GO" id="GO:0030532">
    <property type="term" value="C:small nuclear ribonucleoprotein complex"/>
    <property type="evidence" value="ECO:0000304"/>
    <property type="project" value="UniProtKB"/>
</dbReference>
<dbReference type="GO" id="GO:0005681">
    <property type="term" value="C:spliceosomal complex"/>
    <property type="evidence" value="ECO:0000304"/>
    <property type="project" value="UniProtKB"/>
</dbReference>
<dbReference type="GO" id="GO:0005685">
    <property type="term" value="C:U1 snRNP"/>
    <property type="evidence" value="ECO:0000318"/>
    <property type="project" value="GO_Central"/>
</dbReference>
<dbReference type="GO" id="GO:0005686">
    <property type="term" value="C:U2 snRNP"/>
    <property type="evidence" value="ECO:0000318"/>
    <property type="project" value="GO_Central"/>
</dbReference>
<dbReference type="GO" id="GO:0071004">
    <property type="term" value="C:U2-type prespliceosome"/>
    <property type="evidence" value="ECO:0000318"/>
    <property type="project" value="GO_Central"/>
</dbReference>
<dbReference type="GO" id="GO:0005687">
    <property type="term" value="C:U4 snRNP"/>
    <property type="evidence" value="ECO:0000318"/>
    <property type="project" value="GO_Central"/>
</dbReference>
<dbReference type="GO" id="GO:0046540">
    <property type="term" value="C:U4/U6 x U5 tri-snRNP complex"/>
    <property type="evidence" value="ECO:0000318"/>
    <property type="project" value="GO_Central"/>
</dbReference>
<dbReference type="GO" id="GO:0005682">
    <property type="term" value="C:U5 snRNP"/>
    <property type="evidence" value="ECO:0000318"/>
    <property type="project" value="GO_Central"/>
</dbReference>
<dbReference type="GO" id="GO:0003723">
    <property type="term" value="F:RNA binding"/>
    <property type="evidence" value="ECO:0007669"/>
    <property type="project" value="UniProtKB-KW"/>
</dbReference>
<dbReference type="GO" id="GO:0070990">
    <property type="term" value="F:snRNP binding"/>
    <property type="evidence" value="ECO:0000318"/>
    <property type="project" value="GO_Central"/>
</dbReference>
<dbReference type="GO" id="GO:0000398">
    <property type="term" value="P:mRNA splicing, via spliceosome"/>
    <property type="evidence" value="ECO:0000318"/>
    <property type="project" value="GO_Central"/>
</dbReference>
<dbReference type="GO" id="GO:0008380">
    <property type="term" value="P:RNA splicing"/>
    <property type="evidence" value="ECO:0000304"/>
    <property type="project" value="UniProtKB"/>
</dbReference>
<dbReference type="CDD" id="cd01717">
    <property type="entry name" value="Sm_B"/>
    <property type="match status" value="1"/>
</dbReference>
<dbReference type="FunFam" id="2.30.30.100:FF:000004">
    <property type="entry name" value="Small nuclear ribonucleoprotein-associated proteins"/>
    <property type="match status" value="1"/>
</dbReference>
<dbReference type="Gene3D" id="2.30.30.100">
    <property type="match status" value="1"/>
</dbReference>
<dbReference type="InterPro" id="IPR010920">
    <property type="entry name" value="LSM_dom_sf"/>
</dbReference>
<dbReference type="InterPro" id="IPR047575">
    <property type="entry name" value="Sm"/>
</dbReference>
<dbReference type="InterPro" id="IPR001163">
    <property type="entry name" value="Sm_dom_euk/arc"/>
</dbReference>
<dbReference type="InterPro" id="IPR017131">
    <property type="entry name" value="snRNP-assoc_SmB/SmN"/>
</dbReference>
<dbReference type="PANTHER" id="PTHR14508">
    <property type="entry name" value="SNRPN UPSTREAM READING FRAME PROTEIN, SNURF"/>
    <property type="match status" value="1"/>
</dbReference>
<dbReference type="PANTHER" id="PTHR14508:SF2">
    <property type="entry name" value="SNRPN UPSTREAM READING FRAME PROTEIN-RELATED"/>
    <property type="match status" value="1"/>
</dbReference>
<dbReference type="Pfam" id="PF01423">
    <property type="entry name" value="LSM"/>
    <property type="match status" value="1"/>
</dbReference>
<dbReference type="PIRSF" id="PIRSF037187">
    <property type="entry name" value="snRNP_SmB/SmN"/>
    <property type="match status" value="1"/>
</dbReference>
<dbReference type="SMART" id="SM00651">
    <property type="entry name" value="Sm"/>
    <property type="match status" value="1"/>
</dbReference>
<dbReference type="SUPFAM" id="SSF50182">
    <property type="entry name" value="Sm-like ribonucleoproteins"/>
    <property type="match status" value="1"/>
</dbReference>
<dbReference type="PROSITE" id="PS52002">
    <property type="entry name" value="SM"/>
    <property type="match status" value="1"/>
</dbReference>
<gene>
    <name type="primary">SNRPN</name>
    <name type="synonym">HCERN3</name>
    <name type="synonym">SMN</name>
</gene>
<proteinExistence type="evidence at protein level"/>
<protein>
    <recommendedName>
        <fullName>Small nuclear ribonucleoprotein-associated protein N</fullName>
        <shortName>snRNP-N</shortName>
    </recommendedName>
    <alternativeName>
        <fullName>Sm protein D</fullName>
        <shortName>Sm-D</shortName>
    </alternativeName>
    <alternativeName>
        <fullName>Sm protein N</fullName>
        <shortName>Sm-N</shortName>
        <shortName>SmN</shortName>
    </alternativeName>
    <alternativeName>
        <fullName>Tissue-specific-splicing protein</fullName>
    </alternativeName>
</protein>
<organism>
    <name type="scientific">Homo sapiens</name>
    <name type="common">Human</name>
    <dbReference type="NCBI Taxonomy" id="9606"/>
    <lineage>
        <taxon>Eukaryota</taxon>
        <taxon>Metazoa</taxon>
        <taxon>Chordata</taxon>
        <taxon>Craniata</taxon>
        <taxon>Vertebrata</taxon>
        <taxon>Euteleostomi</taxon>
        <taxon>Mammalia</taxon>
        <taxon>Eutheria</taxon>
        <taxon>Euarchontoglires</taxon>
        <taxon>Primates</taxon>
        <taxon>Haplorrhini</taxon>
        <taxon>Catarrhini</taxon>
        <taxon>Hominidae</taxon>
        <taxon>Homo</taxon>
    </lineage>
</organism>